<sequence length="416" mass="43271">MNKQSWLLNLSLLKTHPAFRAVFLARFISIVSLGLLGVAVPVQIQMMTHSTWQVGLSVTLTGGAMFVGLMVGGVLADRYERKKVILLARGTCGIGFIGLCLNALLPEPSLLAIYLLGLWDGFFASLGVTALLAATPALVGRENLMQAGAITMLTVRLGSVISPMIGGLLLATGGVAWNYGLAAAGTFITLLPLLSLPALPPPPQPREHPLKSLLAGFRFLLASPLVGGIALLGGLLTMASAVRVLYPALADNWQMSAAQIGFLYAAIPLGAAIGALTSGKLAHSARPGLLMLLSTLGSFLAIGLFGLMPMWILGVVCLALFGWLSAVSSLLQYTMLQTQTPEAMLGRINGLWTAQNVTGDAIGAALLGGLGAMMTPVASASASGFGLLIIGVLLLLVLVELRRFRQTPPQVTASDG</sequence>
<accession>B5YPT7</accession>
<feature type="chain" id="PRO_1000145843" description="Enterobactin exporter EntS">
    <location>
        <begin position="1"/>
        <end position="416"/>
    </location>
</feature>
<feature type="topological domain" description="Cytoplasmic" evidence="1">
    <location>
        <begin position="1"/>
        <end position="21"/>
    </location>
</feature>
<feature type="transmembrane region" description="Helical" evidence="1">
    <location>
        <begin position="22"/>
        <end position="42"/>
    </location>
</feature>
<feature type="topological domain" description="Periplasmic" evidence="1">
    <location>
        <begin position="43"/>
        <end position="55"/>
    </location>
</feature>
<feature type="transmembrane region" description="Helical" evidence="1">
    <location>
        <begin position="56"/>
        <end position="76"/>
    </location>
</feature>
<feature type="topological domain" description="Cytoplasmic" evidence="1">
    <location>
        <begin position="77"/>
        <end position="83"/>
    </location>
</feature>
<feature type="transmembrane region" description="Helical" evidence="1">
    <location>
        <begin position="84"/>
        <end position="104"/>
    </location>
</feature>
<feature type="topological domain" description="Periplasmic" evidence="1">
    <location>
        <begin position="105"/>
        <end position="109"/>
    </location>
</feature>
<feature type="transmembrane region" description="Helical" evidence="1">
    <location>
        <begin position="110"/>
        <end position="130"/>
    </location>
</feature>
<feature type="topological domain" description="Cytoplasmic" evidence="1">
    <location>
        <begin position="131"/>
        <end position="156"/>
    </location>
</feature>
<feature type="transmembrane region" description="Helical" evidence="1">
    <location>
        <begin position="157"/>
        <end position="177"/>
    </location>
</feature>
<feature type="topological domain" description="Periplasmic" evidence="1">
    <location>
        <position position="178"/>
    </location>
</feature>
<feature type="transmembrane region" description="Helical" evidence="1">
    <location>
        <begin position="179"/>
        <end position="199"/>
    </location>
</feature>
<feature type="topological domain" description="Cytoplasmic" evidence="1">
    <location>
        <begin position="200"/>
        <end position="218"/>
    </location>
</feature>
<feature type="transmembrane region" description="Helical" evidence="1">
    <location>
        <begin position="219"/>
        <end position="239"/>
    </location>
</feature>
<feature type="topological domain" description="Periplasmic" evidence="1">
    <location>
        <begin position="240"/>
        <end position="256"/>
    </location>
</feature>
<feature type="transmembrane region" description="Helical" evidence="1">
    <location>
        <begin position="257"/>
        <end position="277"/>
    </location>
</feature>
<feature type="topological domain" description="Cytoplasmic" evidence="1">
    <location>
        <begin position="278"/>
        <end position="287"/>
    </location>
</feature>
<feature type="transmembrane region" description="Helical" evidence="1">
    <location>
        <begin position="288"/>
        <end position="307"/>
    </location>
</feature>
<feature type="topological domain" description="Periplasmic" evidence="1">
    <location>
        <begin position="308"/>
        <end position="313"/>
    </location>
</feature>
<feature type="transmembrane region" description="Helical" evidence="1">
    <location>
        <begin position="314"/>
        <end position="336"/>
    </location>
</feature>
<feature type="topological domain" description="Cytoplasmic" evidence="1">
    <location>
        <begin position="337"/>
        <end position="356"/>
    </location>
</feature>
<feature type="transmembrane region" description="Helical" evidence="1">
    <location>
        <begin position="357"/>
        <end position="377"/>
    </location>
</feature>
<feature type="topological domain" description="Periplasmic" evidence="1">
    <location>
        <position position="378"/>
    </location>
</feature>
<feature type="transmembrane region" description="Helical" evidence="1">
    <location>
        <begin position="379"/>
        <end position="399"/>
    </location>
</feature>
<feature type="topological domain" description="Cytoplasmic" evidence="1">
    <location>
        <begin position="400"/>
        <end position="416"/>
    </location>
</feature>
<keyword id="KW-0997">Cell inner membrane</keyword>
<keyword id="KW-1003">Cell membrane</keyword>
<keyword id="KW-0472">Membrane</keyword>
<keyword id="KW-0812">Transmembrane</keyword>
<keyword id="KW-1133">Transmembrane helix</keyword>
<keyword id="KW-0813">Transport</keyword>
<comment type="function">
    <text evidence="1">Component of an export pathway for enterobactin.</text>
</comment>
<comment type="subcellular location">
    <subcellularLocation>
        <location evidence="1">Cell inner membrane</location>
        <topology evidence="1">Multi-pass membrane protein</topology>
    </subcellularLocation>
</comment>
<comment type="similarity">
    <text evidence="1">Belongs to the major facilitator superfamily. EntS (TC 2.A.1.38) family.</text>
</comment>
<dbReference type="EMBL" id="CP001164">
    <property type="protein sequence ID" value="ACI37398.1"/>
    <property type="molecule type" value="Genomic_DNA"/>
</dbReference>
<dbReference type="RefSeq" id="WP_001041788.1">
    <property type="nucleotide sequence ID" value="NC_011353.1"/>
</dbReference>
<dbReference type="SMR" id="B5YPT7"/>
<dbReference type="KEGG" id="ecf:ECH74115_0676"/>
<dbReference type="HOGENOM" id="CLU_034180_11_0_6"/>
<dbReference type="GO" id="GO:0005886">
    <property type="term" value="C:plasma membrane"/>
    <property type="evidence" value="ECO:0007669"/>
    <property type="project" value="UniProtKB-SubCell"/>
</dbReference>
<dbReference type="GO" id="GO:0042931">
    <property type="term" value="F:enterobactin transmembrane transporter activity"/>
    <property type="evidence" value="ECO:0007669"/>
    <property type="project" value="InterPro"/>
</dbReference>
<dbReference type="CDD" id="cd06173">
    <property type="entry name" value="MFS_MefA_like"/>
    <property type="match status" value="1"/>
</dbReference>
<dbReference type="FunFam" id="1.20.1250.20:FF:000056">
    <property type="entry name" value="Enterobactin exporter EntS"/>
    <property type="match status" value="1"/>
</dbReference>
<dbReference type="Gene3D" id="1.20.1250.20">
    <property type="entry name" value="MFS general substrate transporter like domains"/>
    <property type="match status" value="1"/>
</dbReference>
<dbReference type="HAMAP" id="MF_01436">
    <property type="entry name" value="MFS_EntS"/>
    <property type="match status" value="1"/>
</dbReference>
<dbReference type="InterPro" id="IPR023722">
    <property type="entry name" value="Enterobactin_exp_EntS"/>
</dbReference>
<dbReference type="InterPro" id="IPR020846">
    <property type="entry name" value="MFS_dom"/>
</dbReference>
<dbReference type="InterPro" id="IPR036259">
    <property type="entry name" value="MFS_trans_sf"/>
</dbReference>
<dbReference type="InterPro" id="IPR010290">
    <property type="entry name" value="TM_effector"/>
</dbReference>
<dbReference type="NCBIfam" id="NF007792">
    <property type="entry name" value="PRK10489.1"/>
    <property type="match status" value="1"/>
</dbReference>
<dbReference type="PANTHER" id="PTHR23513:SF9">
    <property type="entry name" value="ENTEROBACTIN EXPORTER ENTS"/>
    <property type="match status" value="1"/>
</dbReference>
<dbReference type="PANTHER" id="PTHR23513">
    <property type="entry name" value="INTEGRAL MEMBRANE EFFLUX PROTEIN-RELATED"/>
    <property type="match status" value="1"/>
</dbReference>
<dbReference type="Pfam" id="PF05977">
    <property type="entry name" value="MFS_3"/>
    <property type="match status" value="1"/>
</dbReference>
<dbReference type="SUPFAM" id="SSF103473">
    <property type="entry name" value="MFS general substrate transporter"/>
    <property type="match status" value="1"/>
</dbReference>
<dbReference type="PROSITE" id="PS50850">
    <property type="entry name" value="MFS"/>
    <property type="match status" value="1"/>
</dbReference>
<name>ENTS_ECO5E</name>
<gene>
    <name evidence="1" type="primary">entS</name>
    <name type="ordered locus">ECH74115_0676</name>
</gene>
<reference key="1">
    <citation type="journal article" date="2011" name="Proc. Natl. Acad. Sci. U.S.A.">
        <title>Genomic anatomy of Escherichia coli O157:H7 outbreaks.</title>
        <authorList>
            <person name="Eppinger M."/>
            <person name="Mammel M.K."/>
            <person name="Leclerc J.E."/>
            <person name="Ravel J."/>
            <person name="Cebula T.A."/>
        </authorList>
    </citation>
    <scope>NUCLEOTIDE SEQUENCE [LARGE SCALE GENOMIC DNA]</scope>
    <source>
        <strain>EC4115 / EHEC</strain>
    </source>
</reference>
<protein>
    <recommendedName>
        <fullName evidence="1">Enterobactin exporter EntS</fullName>
    </recommendedName>
</protein>
<proteinExistence type="inferred from homology"/>
<organism>
    <name type="scientific">Escherichia coli O157:H7 (strain EC4115 / EHEC)</name>
    <dbReference type="NCBI Taxonomy" id="444450"/>
    <lineage>
        <taxon>Bacteria</taxon>
        <taxon>Pseudomonadati</taxon>
        <taxon>Pseudomonadota</taxon>
        <taxon>Gammaproteobacteria</taxon>
        <taxon>Enterobacterales</taxon>
        <taxon>Enterobacteriaceae</taxon>
        <taxon>Escherichia</taxon>
    </lineage>
</organism>
<evidence type="ECO:0000255" key="1">
    <source>
        <dbReference type="HAMAP-Rule" id="MF_01436"/>
    </source>
</evidence>